<keyword id="KW-0067">ATP-binding</keyword>
<keyword id="KW-0472">Membrane</keyword>
<keyword id="KW-0547">Nucleotide-binding</keyword>
<keyword id="KW-1185">Reference proteome</keyword>
<keyword id="KW-0677">Repeat</keyword>
<keyword id="KW-1278">Translocase</keyword>
<keyword id="KW-0812">Transmembrane</keyword>
<keyword id="KW-1133">Transmembrane helix</keyword>
<keyword id="KW-0813">Transport</keyword>
<evidence type="ECO:0000255" key="1"/>
<evidence type="ECO:0000255" key="2">
    <source>
        <dbReference type="PROSITE-ProRule" id="PRU00434"/>
    </source>
</evidence>
<evidence type="ECO:0000255" key="3">
    <source>
        <dbReference type="PROSITE-ProRule" id="PRU00441"/>
    </source>
</evidence>
<evidence type="ECO:0000256" key="4">
    <source>
        <dbReference type="SAM" id="MobiDB-lite"/>
    </source>
</evidence>
<evidence type="ECO:0000269" key="5">
    <source>
    </source>
</evidence>
<evidence type="ECO:0000303" key="6">
    <source>
    </source>
</evidence>
<evidence type="ECO:0000305" key="7"/>
<organism>
    <name type="scientific">Zea mays</name>
    <name type="common">Maize</name>
    <dbReference type="NCBI Taxonomy" id="4577"/>
    <lineage>
        <taxon>Eukaryota</taxon>
        <taxon>Viridiplantae</taxon>
        <taxon>Streptophyta</taxon>
        <taxon>Embryophyta</taxon>
        <taxon>Tracheophyta</taxon>
        <taxon>Spermatophyta</taxon>
        <taxon>Magnoliopsida</taxon>
        <taxon>Liliopsida</taxon>
        <taxon>Poales</taxon>
        <taxon>Poaceae</taxon>
        <taxon>PACMAD clade</taxon>
        <taxon>Panicoideae</taxon>
        <taxon>Andropogonodae</taxon>
        <taxon>Andropogoneae</taxon>
        <taxon>Tripsacinae</taxon>
        <taxon>Zea</taxon>
    </lineage>
</organism>
<protein>
    <recommendedName>
        <fullName evidence="7">ABC transporter C family MRP4</fullName>
        <ecNumber evidence="7">7.-.-.-</ecNumber>
    </recommendedName>
    <alternativeName>
        <fullName evidence="7">Multidrug resistance-associated protein 4</fullName>
        <shortName evidence="6">ZmMRP4</shortName>
    </alternativeName>
    <alternativeName>
        <fullName evidence="6">Protein LOW PHYTIC ACID 1</fullName>
    </alternativeName>
</protein>
<sequence>MPPSFPSLPLPEAVAATAHAALLALAALLLLLRAARALASRCASCLKAPRRRGGPAVVVGDGAGGALAAATAGAWHRAVLASCAYALLSQVAVLSYEVAVAGSRVSARALLLPAVQAVSWAALLALALQARAVGWARFPALVRLWWVVSFALCVVIAYDDSRRLIGQGARAVDYAHMVANFASVPALGFLCLVGVMGSTGLELEFTEDGNGLHEPLLLGRQRREAEEELGCLRVTPYADAGILSLATLSWLSPLLSVGAQRPLELADIPLLAHKDRAKSCYKAMSAHYERQRLEYPGREPSLTWAILKSFWREAAVNGTFAAVNTIVSYVGPYLISYFVDYLSGNIAFPHEGYILASIFFVAKLLETLTARQWYLGVDIMGIHVKSGLTAMVYRKGLRLSNASRQSHTSGEIVNYMAVDVQRVGDYAWYFHDIWMLPLQIILALAILYKNVGIAMVSTLVATVLSIAASVPVAKLQEHYQDKLMASKDERMRKTSECLKNMRILKLQAWEDRYRLQLEEMRNVECRWLRWALYSQAAVTFVFWSSPIFVAVITFGTCILLGGQLTAGGVLSALATFRILQEPLRNFPDLISMMAQTRVSLDRLSHFLQQEELPDDATINVPQSSTDKAVDIKDGAFSWNPYTLTPTLSDIHLSVVRGMRVAVCGVIGSGKSSLLSSILGEIPKLCGHVRISGTAAYVPQTAWIQSGNIEENILFGSQMDRQRYKRVIAACCLKKDLELLQYGDQTVIGDRGINLSGGQKQRVQLARALYQDADIYLLDDPFSAVDAHTGSELFKEYILTALATKTVIYVTHQVEFLPAADLILVLKDGHITQAGKYDDLLQAGTDFNALVSAHKEAIETMDIFEDSDSDTVSSIPNKRLTPSISNIDNLKNKMCENGQPSNTRGIKEKKKKEERKKKRTVQEEERERGKVSSKVYLSYMGEAYKGTLIPLIILAQTMFQVLQIASNWWMAWANPQTEGDAPKTDSVVLLVVYMSLAFGSSLFVFMRSLLVATFGLAAAQKLFIKMLRCVFRAPMSFFDTTPSGRILNRVSVDQSVVDLDIAFRLGGFASTTIQLLGIVAVMSKVTWQVLILIVPMAVACMWMQRYYIASSRELTRILSVQKSPVIHLFSESIAGAATIRGFGQEKRFMKRNLYLLDCFARPLFSSLAAIEWLCLRMELLSTFVFAFCMAILVSFPPGTIEPSMAGLAVTYGLNLNARMSRWILSFCKLENRIISVERIYQYCRLPSEAPLIIENCRPPSSWPQNGNIELIDLKVRYKDDLPLVLHGVSCMFPGGKKIGIVGRTGSGKSTLIQALFRLIEPTGGKIIIDNIDISAIGLHDLRSRLSIIPQDPTLFEGTIRMNLDPLEECTDQEIWEALEKCQLGEVIRSKEEKLDSPVLENGDNWSVGQRQLIALGRALLKQAKILVLDEATASVDTATDNLIQKIIRSEFKDCTVCTIAHRIPTVIDSDLVLVLSDGKIAEFDTPQRLLEDKSSMFIQLVSEYSTRSSCI</sequence>
<gene>
    <name evidence="6" type="primary">MRP4</name>
    <name evidence="6" type="synonym">LPA1</name>
</gene>
<accession>A7KVC2</accession>
<comment type="function">
    <text evidence="5">ABC transporter that may affect phytic acid transport and compartmentalization. May function directly or indirectly in removing phytic acid from the cytosol or in vesicle trafficking. Required for phytic acid accumulation in developing seeds. Phytic acid is the primary storage form of phosphorus in cereal grains and other plant seeds.</text>
</comment>
<comment type="subcellular location">
    <subcellularLocation>
        <location evidence="1">Membrane</location>
        <topology evidence="1">Multi-pass membrane protein</topology>
    </subcellularLocation>
</comment>
<comment type="tissue specificity">
    <text evidence="5">Expressed in roots, leaves, stalks, tassels, silks, developing seeds and developing embryos.</text>
</comment>
<comment type="disruption phenotype">
    <text evidence="5">Strong reduction in seed phytic acid, and strong increase of inorganic phosphate and myo-inositol levels in seeds.</text>
</comment>
<comment type="similarity">
    <text evidence="7">Belongs to the ABC transporter superfamily. ABCC family. Conjugate transporter (TC 3.A.1.208) subfamily.</text>
</comment>
<feature type="chain" id="PRO_0000431885" description="ABC transporter C family MRP4">
    <location>
        <begin position="1"/>
        <end position="1510"/>
    </location>
</feature>
<feature type="transmembrane region" description="Helical; Name=1" evidence="1">
    <location>
        <begin position="12"/>
        <end position="32"/>
    </location>
</feature>
<feature type="transmembrane region" description="Helical; Name=2" evidence="1">
    <location>
        <begin position="55"/>
        <end position="75"/>
    </location>
</feature>
<feature type="transmembrane region" description="Helical; Name=3" evidence="1">
    <location>
        <begin position="78"/>
        <end position="98"/>
    </location>
</feature>
<feature type="transmembrane region" description="Helical; Name=4" evidence="1">
    <location>
        <begin position="109"/>
        <end position="129"/>
    </location>
</feature>
<feature type="transmembrane region" description="Helical; Name=5" evidence="1">
    <location>
        <begin position="138"/>
        <end position="158"/>
    </location>
</feature>
<feature type="transmembrane region" description="Helical; Name=6" evidence="1">
    <location>
        <begin position="177"/>
        <end position="197"/>
    </location>
</feature>
<feature type="transmembrane region" description="Helical; Name=7" evidence="1">
    <location>
        <begin position="319"/>
        <end position="339"/>
    </location>
</feature>
<feature type="transmembrane region" description="Helical; Name=8" evidence="1">
    <location>
        <begin position="342"/>
        <end position="362"/>
    </location>
</feature>
<feature type="transmembrane region" description="Helical; Name=9" evidence="1">
    <location>
        <begin position="373"/>
        <end position="393"/>
    </location>
</feature>
<feature type="transmembrane region" description="Helical; Name=10" evidence="1">
    <location>
        <begin position="427"/>
        <end position="447"/>
    </location>
</feature>
<feature type="transmembrane region" description="Helical; Name=11" evidence="1">
    <location>
        <begin position="453"/>
        <end position="473"/>
    </location>
</feature>
<feature type="transmembrane region" description="Helical; Name=12" evidence="1">
    <location>
        <begin position="540"/>
        <end position="560"/>
    </location>
</feature>
<feature type="transmembrane region" description="Helical; Name=13" evidence="1">
    <location>
        <begin position="945"/>
        <end position="965"/>
    </location>
</feature>
<feature type="transmembrane region" description="Helical; Name=14" evidence="1">
    <location>
        <begin position="985"/>
        <end position="1005"/>
    </location>
</feature>
<feature type="transmembrane region" description="Helical; Name=15" evidence="1">
    <location>
        <begin position="1060"/>
        <end position="1082"/>
    </location>
</feature>
<feature type="transmembrane region" description="Helical; Name=16" evidence="1">
    <location>
        <begin position="1086"/>
        <end position="1108"/>
    </location>
</feature>
<feature type="transmembrane region" description="Helical; Name=17" evidence="1">
    <location>
        <begin position="1154"/>
        <end position="1174"/>
    </location>
</feature>
<feature type="transmembrane region" description="Helical; Name=18" evidence="1">
    <location>
        <begin position="1179"/>
        <end position="1199"/>
    </location>
</feature>
<feature type="domain" description="ABC transmembrane type-1 1" evidence="3">
    <location>
        <begin position="320"/>
        <end position="595"/>
    </location>
</feature>
<feature type="domain" description="ABC transporter 1" evidence="2">
    <location>
        <begin position="629"/>
        <end position="852"/>
    </location>
</feature>
<feature type="domain" description="ABC transmembrane type-1 2" evidence="3">
    <location>
        <begin position="950"/>
        <end position="1220"/>
    </location>
</feature>
<feature type="domain" description="ABC transporter 2" evidence="2">
    <location>
        <begin position="1267"/>
        <end position="1501"/>
    </location>
</feature>
<feature type="region of interest" description="Disordered" evidence="4">
    <location>
        <begin position="889"/>
        <end position="925"/>
    </location>
</feature>
<feature type="compositionally biased region" description="Basic residues" evidence="4">
    <location>
        <begin position="906"/>
        <end position="918"/>
    </location>
</feature>
<feature type="binding site" evidence="2">
    <location>
        <begin position="664"/>
        <end position="671"/>
    </location>
    <ligand>
        <name>ATP</name>
        <dbReference type="ChEBI" id="CHEBI:30616"/>
    </ligand>
</feature>
<feature type="binding site" evidence="2">
    <location>
        <begin position="1301"/>
        <end position="1308"/>
    </location>
    <ligand>
        <name>ATP</name>
        <dbReference type="ChEBI" id="CHEBI:30616"/>
    </ligand>
</feature>
<name>AB4C_MAIZE</name>
<proteinExistence type="evidence at transcript level"/>
<dbReference type="EC" id="7.-.-.-" evidence="7"/>
<dbReference type="EMBL" id="EF586878">
    <property type="protein sequence ID" value="ABS81429.1"/>
    <property type="molecule type" value="mRNA"/>
</dbReference>
<dbReference type="RefSeq" id="NP_001106060.1">
    <property type="nucleotide sequence ID" value="NM_001112590.1"/>
</dbReference>
<dbReference type="SMR" id="A7KVC2"/>
<dbReference type="FunCoup" id="A7KVC2">
    <property type="interactions" value="2277"/>
</dbReference>
<dbReference type="STRING" id="4577.A7KVC2"/>
<dbReference type="TCDB" id="3.A.1.208.42">
    <property type="family name" value="the atp-binding cassette (abc) superfamily"/>
</dbReference>
<dbReference type="PaxDb" id="4577-GRMZM5G820122_P01"/>
<dbReference type="EnsemblPlants" id="Zm00001eb003490_T001">
    <property type="protein sequence ID" value="Zm00001eb003490_P001"/>
    <property type="gene ID" value="Zm00001eb003490"/>
</dbReference>
<dbReference type="GeneID" id="100125659"/>
<dbReference type="Gramene" id="Zm00001eb003490_T001">
    <property type="protein sequence ID" value="Zm00001eb003490_P001"/>
    <property type="gene ID" value="Zm00001eb003490"/>
</dbReference>
<dbReference type="KEGG" id="zma:100125659"/>
<dbReference type="eggNOG" id="KOG0054">
    <property type="taxonomic scope" value="Eukaryota"/>
</dbReference>
<dbReference type="InParanoid" id="A7KVC2"/>
<dbReference type="OrthoDB" id="6500128at2759"/>
<dbReference type="Proteomes" id="UP000007305">
    <property type="component" value="Chromosome 1"/>
</dbReference>
<dbReference type="ExpressionAtlas" id="A7KVC2">
    <property type="expression patterns" value="baseline and differential"/>
</dbReference>
<dbReference type="GO" id="GO:0016020">
    <property type="term" value="C:membrane"/>
    <property type="evidence" value="ECO:0000318"/>
    <property type="project" value="GO_Central"/>
</dbReference>
<dbReference type="GO" id="GO:0140359">
    <property type="term" value="F:ABC-type transporter activity"/>
    <property type="evidence" value="ECO:0007669"/>
    <property type="project" value="InterPro"/>
</dbReference>
<dbReference type="GO" id="GO:0005524">
    <property type="term" value="F:ATP binding"/>
    <property type="evidence" value="ECO:0007669"/>
    <property type="project" value="UniProtKB-KW"/>
</dbReference>
<dbReference type="GO" id="GO:0016887">
    <property type="term" value="F:ATP hydrolysis activity"/>
    <property type="evidence" value="ECO:0007669"/>
    <property type="project" value="InterPro"/>
</dbReference>
<dbReference type="GO" id="GO:0042626">
    <property type="term" value="F:ATPase-coupled transmembrane transporter activity"/>
    <property type="evidence" value="ECO:0000318"/>
    <property type="project" value="GO_Central"/>
</dbReference>
<dbReference type="GO" id="GO:0055085">
    <property type="term" value="P:transmembrane transport"/>
    <property type="evidence" value="ECO:0000315"/>
    <property type="project" value="UniProtKB"/>
</dbReference>
<dbReference type="CDD" id="cd18579">
    <property type="entry name" value="ABC_6TM_ABCC_D1"/>
    <property type="match status" value="1"/>
</dbReference>
<dbReference type="CDD" id="cd18580">
    <property type="entry name" value="ABC_6TM_ABCC_D2"/>
    <property type="match status" value="1"/>
</dbReference>
<dbReference type="CDD" id="cd03250">
    <property type="entry name" value="ABCC_MRP_domain1"/>
    <property type="match status" value="1"/>
</dbReference>
<dbReference type="CDD" id="cd03244">
    <property type="entry name" value="ABCC_MRP_domain2"/>
    <property type="match status" value="1"/>
</dbReference>
<dbReference type="FunFam" id="1.20.1560.10:FF:000003">
    <property type="entry name" value="ABC transporter C family member 10"/>
    <property type="match status" value="1"/>
</dbReference>
<dbReference type="FunFam" id="3.40.50.300:FF:000169">
    <property type="entry name" value="ABC transporter C family member 3"/>
    <property type="match status" value="1"/>
</dbReference>
<dbReference type="FunFam" id="1.20.1560.10:FF:000002">
    <property type="entry name" value="ABC transporter C family member 5"/>
    <property type="match status" value="1"/>
</dbReference>
<dbReference type="FunFam" id="3.40.50.300:FF:000508">
    <property type="entry name" value="ABC transporter C family member 5"/>
    <property type="match status" value="1"/>
</dbReference>
<dbReference type="Gene3D" id="1.20.1560.10">
    <property type="entry name" value="ABC transporter type 1, transmembrane domain"/>
    <property type="match status" value="2"/>
</dbReference>
<dbReference type="Gene3D" id="3.40.50.300">
    <property type="entry name" value="P-loop containing nucleotide triphosphate hydrolases"/>
    <property type="match status" value="2"/>
</dbReference>
<dbReference type="InterPro" id="IPR003593">
    <property type="entry name" value="AAA+_ATPase"/>
</dbReference>
<dbReference type="InterPro" id="IPR011527">
    <property type="entry name" value="ABC1_TM_dom"/>
</dbReference>
<dbReference type="InterPro" id="IPR036640">
    <property type="entry name" value="ABC1_TM_sf"/>
</dbReference>
<dbReference type="InterPro" id="IPR003439">
    <property type="entry name" value="ABC_transporter-like_ATP-bd"/>
</dbReference>
<dbReference type="InterPro" id="IPR017871">
    <property type="entry name" value="ABC_transporter-like_CS"/>
</dbReference>
<dbReference type="InterPro" id="IPR050173">
    <property type="entry name" value="ABC_transporter_C-like"/>
</dbReference>
<dbReference type="InterPro" id="IPR044746">
    <property type="entry name" value="ABCC_6TM_D1"/>
</dbReference>
<dbReference type="InterPro" id="IPR044726">
    <property type="entry name" value="ABCC_6TM_D2"/>
</dbReference>
<dbReference type="InterPro" id="IPR027417">
    <property type="entry name" value="P-loop_NTPase"/>
</dbReference>
<dbReference type="PANTHER" id="PTHR24223:SF189">
    <property type="entry name" value="ABC TRANSPORTER C FAMILY MEMBER 5"/>
    <property type="match status" value="1"/>
</dbReference>
<dbReference type="PANTHER" id="PTHR24223">
    <property type="entry name" value="ATP-BINDING CASSETTE SUB-FAMILY C"/>
    <property type="match status" value="1"/>
</dbReference>
<dbReference type="Pfam" id="PF00664">
    <property type="entry name" value="ABC_membrane"/>
    <property type="match status" value="2"/>
</dbReference>
<dbReference type="Pfam" id="PF00005">
    <property type="entry name" value="ABC_tran"/>
    <property type="match status" value="2"/>
</dbReference>
<dbReference type="SMART" id="SM00382">
    <property type="entry name" value="AAA"/>
    <property type="match status" value="2"/>
</dbReference>
<dbReference type="SUPFAM" id="SSF90123">
    <property type="entry name" value="ABC transporter transmembrane region"/>
    <property type="match status" value="2"/>
</dbReference>
<dbReference type="SUPFAM" id="SSF52540">
    <property type="entry name" value="P-loop containing nucleoside triphosphate hydrolases"/>
    <property type="match status" value="2"/>
</dbReference>
<dbReference type="PROSITE" id="PS50929">
    <property type="entry name" value="ABC_TM1F"/>
    <property type="match status" value="2"/>
</dbReference>
<dbReference type="PROSITE" id="PS00211">
    <property type="entry name" value="ABC_TRANSPORTER_1"/>
    <property type="match status" value="1"/>
</dbReference>
<dbReference type="PROSITE" id="PS50893">
    <property type="entry name" value="ABC_TRANSPORTER_2"/>
    <property type="match status" value="2"/>
</dbReference>
<reference key="1">
    <citation type="journal article" date="2007" name="Nat. Biotechnol.">
        <title>Embryo-specific silencing of a transporter reduces phytic acid content of maize and soybean seeds.</title>
        <authorList>
            <person name="Shi J."/>
            <person name="Wang H."/>
            <person name="Schellin K."/>
            <person name="Li B."/>
            <person name="Faller M."/>
            <person name="Stoop J.M."/>
            <person name="Meeley R.B."/>
            <person name="Ertl D.S."/>
            <person name="Ranch J.P."/>
            <person name="Glassman K."/>
        </authorList>
    </citation>
    <scope>NUCLEOTIDE SEQUENCE [MRNA]</scope>
    <scope>FUNCTION</scope>
    <scope>TISSUE SPECIFICITY</scope>
    <scope>DISRUPTION PHENOTYPE</scope>
    <source>
        <strain>cv. B73</strain>
    </source>
</reference>